<name>RL14_HAEIG</name>
<proteinExistence type="inferred from homology"/>
<organism>
    <name type="scientific">Haemophilus influenzae (strain PittGG)</name>
    <dbReference type="NCBI Taxonomy" id="374931"/>
    <lineage>
        <taxon>Bacteria</taxon>
        <taxon>Pseudomonadati</taxon>
        <taxon>Pseudomonadota</taxon>
        <taxon>Gammaproteobacteria</taxon>
        <taxon>Pasteurellales</taxon>
        <taxon>Pasteurellaceae</taxon>
        <taxon>Haemophilus</taxon>
    </lineage>
</organism>
<feature type="chain" id="PRO_1000055591" description="Large ribosomal subunit protein uL14">
    <location>
        <begin position="1"/>
        <end position="123"/>
    </location>
</feature>
<gene>
    <name evidence="1" type="primary">rplN</name>
    <name type="ordered locus">CGSHiGG_07440</name>
</gene>
<keyword id="KW-0687">Ribonucleoprotein</keyword>
<keyword id="KW-0689">Ribosomal protein</keyword>
<keyword id="KW-0694">RNA-binding</keyword>
<keyword id="KW-0699">rRNA-binding</keyword>
<sequence>MIQEQTMLDVADNSGARSVMCIKVLGGSHRRYAAIGDIIKITVKEAIPRGKVKKGDVLKAVVVRTKKGVRRPDGSVIRFDGNACVILNNNTEQPIGTRIFGPVTRELRSEKFMKIISLAPEVL</sequence>
<evidence type="ECO:0000255" key="1">
    <source>
        <dbReference type="HAMAP-Rule" id="MF_01367"/>
    </source>
</evidence>
<evidence type="ECO:0000305" key="2"/>
<dbReference type="EMBL" id="CP000672">
    <property type="protein sequence ID" value="ABR00347.1"/>
    <property type="molecule type" value="Genomic_DNA"/>
</dbReference>
<dbReference type="SMR" id="A5UHU1"/>
<dbReference type="KEGG" id="hiq:CGSHiGG_07440"/>
<dbReference type="HOGENOM" id="CLU_095071_2_1_6"/>
<dbReference type="Proteomes" id="UP000001990">
    <property type="component" value="Chromosome"/>
</dbReference>
<dbReference type="GO" id="GO:0022625">
    <property type="term" value="C:cytosolic large ribosomal subunit"/>
    <property type="evidence" value="ECO:0007669"/>
    <property type="project" value="TreeGrafter"/>
</dbReference>
<dbReference type="GO" id="GO:0070180">
    <property type="term" value="F:large ribosomal subunit rRNA binding"/>
    <property type="evidence" value="ECO:0007669"/>
    <property type="project" value="TreeGrafter"/>
</dbReference>
<dbReference type="GO" id="GO:0003735">
    <property type="term" value="F:structural constituent of ribosome"/>
    <property type="evidence" value="ECO:0007669"/>
    <property type="project" value="InterPro"/>
</dbReference>
<dbReference type="GO" id="GO:0006412">
    <property type="term" value="P:translation"/>
    <property type="evidence" value="ECO:0007669"/>
    <property type="project" value="UniProtKB-UniRule"/>
</dbReference>
<dbReference type="CDD" id="cd00337">
    <property type="entry name" value="Ribosomal_uL14"/>
    <property type="match status" value="1"/>
</dbReference>
<dbReference type="FunFam" id="2.40.150.20:FF:000001">
    <property type="entry name" value="50S ribosomal protein L14"/>
    <property type="match status" value="1"/>
</dbReference>
<dbReference type="Gene3D" id="2.40.150.20">
    <property type="entry name" value="Ribosomal protein L14"/>
    <property type="match status" value="1"/>
</dbReference>
<dbReference type="HAMAP" id="MF_01367">
    <property type="entry name" value="Ribosomal_uL14"/>
    <property type="match status" value="1"/>
</dbReference>
<dbReference type="InterPro" id="IPR000218">
    <property type="entry name" value="Ribosomal_uL14"/>
</dbReference>
<dbReference type="InterPro" id="IPR005745">
    <property type="entry name" value="Ribosomal_uL14_bac-type"/>
</dbReference>
<dbReference type="InterPro" id="IPR019972">
    <property type="entry name" value="Ribosomal_uL14_CS"/>
</dbReference>
<dbReference type="InterPro" id="IPR036853">
    <property type="entry name" value="Ribosomal_uL14_sf"/>
</dbReference>
<dbReference type="NCBIfam" id="TIGR01067">
    <property type="entry name" value="rplN_bact"/>
    <property type="match status" value="1"/>
</dbReference>
<dbReference type="PANTHER" id="PTHR11761">
    <property type="entry name" value="50S/60S RIBOSOMAL PROTEIN L14/L23"/>
    <property type="match status" value="1"/>
</dbReference>
<dbReference type="PANTHER" id="PTHR11761:SF3">
    <property type="entry name" value="LARGE RIBOSOMAL SUBUNIT PROTEIN UL14M"/>
    <property type="match status" value="1"/>
</dbReference>
<dbReference type="Pfam" id="PF00238">
    <property type="entry name" value="Ribosomal_L14"/>
    <property type="match status" value="1"/>
</dbReference>
<dbReference type="SMART" id="SM01374">
    <property type="entry name" value="Ribosomal_L14"/>
    <property type="match status" value="1"/>
</dbReference>
<dbReference type="SUPFAM" id="SSF50193">
    <property type="entry name" value="Ribosomal protein L14"/>
    <property type="match status" value="1"/>
</dbReference>
<dbReference type="PROSITE" id="PS00049">
    <property type="entry name" value="RIBOSOMAL_L14"/>
    <property type="match status" value="1"/>
</dbReference>
<accession>A5UHU1</accession>
<comment type="function">
    <text evidence="1">Binds to 23S rRNA. Forms part of two intersubunit bridges in the 70S ribosome.</text>
</comment>
<comment type="subunit">
    <text evidence="1">Part of the 50S ribosomal subunit. Forms a cluster with proteins L3 and L19. In the 70S ribosome, L14 and L19 interact and together make contacts with the 16S rRNA in bridges B5 and B8.</text>
</comment>
<comment type="similarity">
    <text evidence="1">Belongs to the universal ribosomal protein uL14 family.</text>
</comment>
<protein>
    <recommendedName>
        <fullName evidence="1">Large ribosomal subunit protein uL14</fullName>
    </recommendedName>
    <alternativeName>
        <fullName evidence="2">50S ribosomal protein L14</fullName>
    </alternativeName>
</protein>
<reference key="1">
    <citation type="journal article" date="2007" name="Genome Biol.">
        <title>Characterization and modeling of the Haemophilus influenzae core and supragenomes based on the complete genomic sequences of Rd and 12 clinical nontypeable strains.</title>
        <authorList>
            <person name="Hogg J.S."/>
            <person name="Hu F.Z."/>
            <person name="Janto B."/>
            <person name="Boissy R."/>
            <person name="Hayes J."/>
            <person name="Keefe R."/>
            <person name="Post J.C."/>
            <person name="Ehrlich G.D."/>
        </authorList>
    </citation>
    <scope>NUCLEOTIDE SEQUENCE [LARGE SCALE GENOMIC DNA]</scope>
    <source>
        <strain>PittGG</strain>
    </source>
</reference>